<evidence type="ECO:0000269" key="1">
    <source>
    </source>
</evidence>
<evidence type="ECO:0000303" key="2">
    <source>
    </source>
</evidence>
<evidence type="ECO:0000303" key="3">
    <source>
    </source>
</evidence>
<evidence type="ECO:0000305" key="4"/>
<evidence type="ECO:0000305" key="5">
    <source>
    </source>
</evidence>
<feature type="chain" id="PRO_0000447114" description="U1-pseudomyrmecitoxin-Pt1 subunit SS1">
    <location>
        <begin position="1"/>
        <end position="29"/>
    </location>
</feature>
<feature type="disulfide bond" description="Interchain (with C-21 in LS1 or LS2)" evidence="4">
    <location>
        <position position="17"/>
    </location>
</feature>
<feature type="disulfide bond" description="Interchain (with C-31 in LS1 or LS2)" evidence="4">
    <location>
        <position position="26"/>
    </location>
</feature>
<sequence length="29" mass="3341">LFGGLLDKLKEKIKKYCNKENLDKACSKL</sequence>
<organism>
    <name type="scientific">Pseudomyrmex triplarinus</name>
    <name type="common">Ant</name>
    <dbReference type="NCBI Taxonomy" id="600763"/>
    <lineage>
        <taxon>Eukaryota</taxon>
        <taxon>Metazoa</taxon>
        <taxon>Ecdysozoa</taxon>
        <taxon>Arthropoda</taxon>
        <taxon>Hexapoda</taxon>
        <taxon>Insecta</taxon>
        <taxon>Pterygota</taxon>
        <taxon>Neoptera</taxon>
        <taxon>Endopterygota</taxon>
        <taxon>Hymenoptera</taxon>
        <taxon>Apocrita</taxon>
        <taxon>Aculeata</taxon>
        <taxon>Formicoidea</taxon>
        <taxon>Formicidae</taxon>
        <taxon>Pseudomyrmecinae</taxon>
        <taxon>Pseudomyrmex</taxon>
    </lineage>
</organism>
<protein>
    <recommendedName>
        <fullName evidence="4">U1-pseudomyrmecitoxin-Pt1 subunit SS1</fullName>
        <shortName evidence="4">U1-PSDTX-Pt1 subunit SS1</shortName>
    </recommendedName>
    <alternativeName>
        <fullName evidence="2">Myrmexin I subunit SS1/Myrmexin II subunit SS1</fullName>
    </alternativeName>
    <alternativeName>
        <fullName evidence="3">U1-pseudomyrmecitoxin-Pt1a subunit SS1/U1-pseudomyrmecitoxin-Pt1b subunit SS1</fullName>
        <shortName evidence="3">U1-PSDTX-Pt1a subunit SS1/U1-PSDTX-Pt1b subunit SS1</shortName>
    </alternativeName>
</protein>
<reference key="1">
    <citation type="journal article" date="2000" name="Toxicon">
        <title>Isolation and characterization of myrmexins, six isoforms of venom proteins with anti-inflammatory activity from the tropical ant, Pseudomyrmex triplarinus.</title>
        <authorList>
            <person name="Pan J."/>
            <person name="Hink W.F."/>
        </authorList>
    </citation>
    <scope>PROTEIN SEQUENCE</scope>
    <scope>FUNCTION</scope>
    <scope>SUBCELLULAR LOCATION</scope>
    <scope>SUBUNIT</scope>
    <scope>IDENTIFICATION BY MASS SPECTROMETRY</scope>
    <source>
        <tissue>Venom</tissue>
    </source>
</reference>
<reference key="2">
    <citation type="journal article" date="2016" name="Toxins">
        <title>The biochemical toxin arsenal from ant venoms.</title>
        <authorList>
            <person name="Touchard A."/>
            <person name="Aili S.R."/>
            <person name="Fox E.G."/>
            <person name="Escoubas P."/>
            <person name="Orivel J."/>
            <person name="Nicholson G.M."/>
            <person name="Dejean A."/>
        </authorList>
    </citation>
    <scope>REVIEW</scope>
    <scope>NOMENCLATURE</scope>
</reference>
<name>TXSS1_PSETR</name>
<proteinExistence type="evidence at protein level"/>
<dbReference type="GO" id="GO:0005576">
    <property type="term" value="C:extracellular region"/>
    <property type="evidence" value="ECO:0007669"/>
    <property type="project" value="UniProtKB-SubCell"/>
</dbReference>
<accession>P0DSL9</accession>
<keyword id="KW-0903">Direct protein sequencing</keyword>
<keyword id="KW-1015">Disulfide bond</keyword>
<keyword id="KW-0964">Secreted</keyword>
<comment type="function">
    <text evidence="1">This heterodimer may have anti-inflammatory properties, since the myrmexin complex (composed of 6 SS-LS heterodimers) inhibits carrageenin-induced edema in a dose-dependent manner (after subcutaneous injection into rats).</text>
</comment>
<comment type="subunit">
    <text evidence="1">Heterodimer composed of subunit SS1 and subunit LS1 (U1-PSDTX-Pt1b), and heterodimer composed of subunit SS1 and LS2 (U1-PSDTX-Pt1a); disulfide-linked.</text>
</comment>
<comment type="subcellular location">
    <subcellularLocation>
        <location evidence="1">Secreted</location>
    </subcellularLocation>
</comment>
<comment type="tissue specificity">
    <text evidence="5">Expressed by the venom gland.</text>
</comment>
<comment type="miscellaneous">
    <text evidence="5">There are 6 heterodimeric myrmexins which consist of a small subunit (SS1 or SS2 or SS3) disulfide-linked to a larger, quite structurally unrelated subunit (LS1 or LS2).</text>
</comment>
<comment type="miscellaneous">
    <text evidence="1">MALDI experiments give a mass of 7069 Da for U1-PSDTX-Pt1a heterodimer (SS1+LS2).</text>
</comment>
<comment type="miscellaneous">
    <text evidence="1">MALDI experiments give a mass of 6998 Da for U1-PSDTX-Pt1b heterodimer (SS1+LS1).</text>
</comment>
<comment type="similarity">
    <text evidence="4">Belongs to the myrmexin family.</text>
</comment>